<gene>
    <name type="primary">hilD</name>
    <name type="ordered locus">SL1344_2855</name>
</gene>
<protein>
    <recommendedName>
        <fullName>Transcriptional regulator HilD</fullName>
    </recommendedName>
</protein>
<accession>E1WAC0</accession>
<accession>P41782</accession>
<accession>Q9X5C3</accession>
<reference key="1">
    <citation type="journal article" date="1999" name="Mol. Microbiol.">
        <title>Two AraC/XylS family members can independently counteract the effect of repressing sequences upstream of the hilA promoter.</title>
        <authorList>
            <person name="Schechter L.M."/>
            <person name="Damrauer S.M."/>
            <person name="Lee C.A."/>
        </authorList>
    </citation>
    <scope>NUCLEOTIDE SEQUENCE [GENOMIC DNA]</scope>
    <source>
        <strain>SL1344</strain>
    </source>
</reference>
<reference key="2">
    <citation type="journal article" date="2012" name="Proc. Natl. Acad. Sci. U.S.A.">
        <title>The transcriptional landscape and small RNAs of Salmonella enterica serovar Typhimurium.</title>
        <authorList>
            <person name="Kroger C."/>
            <person name="Dillon S.C."/>
            <person name="Cameron A.D."/>
            <person name="Papenfort K."/>
            <person name="Sivasankaran S.K."/>
            <person name="Hokamp K."/>
            <person name="Chao Y."/>
            <person name="Sittka A."/>
            <person name="Hebrard M."/>
            <person name="Handler K."/>
            <person name="Colgan A."/>
            <person name="Leekitcharoenphon P."/>
            <person name="Langridge G.C."/>
            <person name="Lohan A.J."/>
            <person name="Loftus B."/>
            <person name="Lucchini S."/>
            <person name="Ussery D.W."/>
            <person name="Dorman C.J."/>
            <person name="Thomson N.R."/>
            <person name="Vogel J."/>
            <person name="Hinton J.C."/>
        </authorList>
    </citation>
    <scope>NUCLEOTIDE SEQUENCE [LARGE SCALE GENOMIC DNA]</scope>
    <source>
        <strain>SL1344</strain>
    </source>
</reference>
<organism>
    <name type="scientific">Salmonella typhimurium (strain SL1344)</name>
    <dbReference type="NCBI Taxonomy" id="216597"/>
    <lineage>
        <taxon>Bacteria</taxon>
        <taxon>Pseudomonadati</taxon>
        <taxon>Pseudomonadota</taxon>
        <taxon>Gammaproteobacteria</taxon>
        <taxon>Enterobacterales</taxon>
        <taxon>Enterobacteriaceae</taxon>
        <taxon>Salmonella</taxon>
    </lineage>
</organism>
<proteinExistence type="predicted"/>
<name>HILD_SALTS</name>
<keyword id="KW-0238">DNA-binding</keyword>
<keyword id="KW-0804">Transcription</keyword>
<keyword id="KW-0805">Transcription regulation</keyword>
<feature type="chain" id="PRO_0000405419" description="Transcriptional regulator HilD">
    <location>
        <begin position="1"/>
        <end position="309"/>
    </location>
</feature>
<feature type="domain" description="HTH araC/xylS-type" evidence="1">
    <location>
        <begin position="209"/>
        <end position="306"/>
    </location>
</feature>
<feature type="DNA-binding region" description="H-T-H motif" evidence="1">
    <location>
        <begin position="226"/>
        <end position="247"/>
    </location>
</feature>
<feature type="DNA-binding region" description="H-T-H motif" evidence="1">
    <location>
        <begin position="273"/>
        <end position="296"/>
    </location>
</feature>
<evidence type="ECO:0000255" key="1">
    <source>
        <dbReference type="PROSITE-ProRule" id="PRU00593"/>
    </source>
</evidence>
<sequence>MENVTFVSNSHQRPAADNLQKLKSLLTNTRQQIKSQTQQVTIKNLYVSSFTLVCFRSGKLTISNNHDTIYCDEPGMLVLKKEQVVNVTLEEVNGHMDFDILEIPTQRLGALYALIPNEQQTKMAVPTEKAQKIFYTPDFPARREVFEHLKTAFSCTKDTSKGCSNCNNKSCIENEELIPYFLLFLLTAFLRLPESYEIILSSAQITLKERVYNIISSSPSRQWKLTDVADHIFMSTSTLKRKLAEEGTSFSDIYLSARMNQAAKLLRIGNHNVNAVALKCGYDSTSYFIQCFKKYFKTTPSTFIKMANH</sequence>
<dbReference type="EMBL" id="AF124398">
    <property type="protein sequence ID" value="AAD21081.1"/>
    <property type="molecule type" value="Genomic_DNA"/>
</dbReference>
<dbReference type="EMBL" id="FQ312003">
    <property type="protein sequence ID" value="CBW18953.1"/>
    <property type="molecule type" value="Genomic_DNA"/>
</dbReference>
<dbReference type="RefSeq" id="WP_000432699.1">
    <property type="nucleotide sequence ID" value="NZ_QASL01000017.1"/>
</dbReference>
<dbReference type="SMR" id="E1WAC0"/>
<dbReference type="KEGG" id="sey:SL1344_2855"/>
<dbReference type="PATRIC" id="fig|216597.6.peg.3176"/>
<dbReference type="HOGENOM" id="CLU_000445_81_4_6"/>
<dbReference type="BioCyc" id="SENT216597:SL1344_RS14885-MONOMER"/>
<dbReference type="PHI-base" id="PHI:11724"/>
<dbReference type="Proteomes" id="UP000008962">
    <property type="component" value="Chromosome"/>
</dbReference>
<dbReference type="GO" id="GO:0003700">
    <property type="term" value="F:DNA-binding transcription factor activity"/>
    <property type="evidence" value="ECO:0007669"/>
    <property type="project" value="InterPro"/>
</dbReference>
<dbReference type="GO" id="GO:0043565">
    <property type="term" value="F:sequence-specific DNA binding"/>
    <property type="evidence" value="ECO:0007669"/>
    <property type="project" value="InterPro"/>
</dbReference>
<dbReference type="Gene3D" id="1.10.10.60">
    <property type="entry name" value="Homeodomain-like"/>
    <property type="match status" value="1"/>
</dbReference>
<dbReference type="InterPro" id="IPR009057">
    <property type="entry name" value="Homeodomain-like_sf"/>
</dbReference>
<dbReference type="InterPro" id="IPR018060">
    <property type="entry name" value="HTH_AraC"/>
</dbReference>
<dbReference type="InterPro" id="IPR018062">
    <property type="entry name" value="HTH_AraC-typ_CS"/>
</dbReference>
<dbReference type="InterPro" id="IPR020449">
    <property type="entry name" value="Tscrpt_reg_AraC-type_HTH"/>
</dbReference>
<dbReference type="NCBIfam" id="NF011732">
    <property type="entry name" value="PRK15185.1"/>
    <property type="match status" value="1"/>
</dbReference>
<dbReference type="PANTHER" id="PTHR43280">
    <property type="entry name" value="ARAC-FAMILY TRANSCRIPTIONAL REGULATOR"/>
    <property type="match status" value="1"/>
</dbReference>
<dbReference type="PANTHER" id="PTHR43280:SF33">
    <property type="entry name" value="HTH-TYPE TRANSCRIPTIONAL REGULATOR APPY-RELATED"/>
    <property type="match status" value="1"/>
</dbReference>
<dbReference type="Pfam" id="PF12833">
    <property type="entry name" value="HTH_18"/>
    <property type="match status" value="1"/>
</dbReference>
<dbReference type="PRINTS" id="PR00032">
    <property type="entry name" value="HTHARAC"/>
</dbReference>
<dbReference type="SMART" id="SM00342">
    <property type="entry name" value="HTH_ARAC"/>
    <property type="match status" value="1"/>
</dbReference>
<dbReference type="SUPFAM" id="SSF46689">
    <property type="entry name" value="Homeodomain-like"/>
    <property type="match status" value="1"/>
</dbReference>
<dbReference type="PROSITE" id="PS00041">
    <property type="entry name" value="HTH_ARAC_FAMILY_1"/>
    <property type="match status" value="1"/>
</dbReference>
<dbReference type="PROSITE" id="PS01124">
    <property type="entry name" value="HTH_ARAC_FAMILY_2"/>
    <property type="match status" value="1"/>
</dbReference>